<evidence type="ECO:0000250" key="1"/>
<evidence type="ECO:0000255" key="2"/>
<evidence type="ECO:0000255" key="3">
    <source>
        <dbReference type="PROSITE-ProRule" id="PRU00303"/>
    </source>
</evidence>
<evidence type="ECO:0000256" key="4">
    <source>
        <dbReference type="SAM" id="MobiDB-lite"/>
    </source>
</evidence>
<evidence type="ECO:0000305" key="5"/>
<reference key="1">
    <citation type="journal article" date="2001" name="Lancet">
        <title>Whole genome sequencing of meticillin-resistant Staphylococcus aureus.</title>
        <authorList>
            <person name="Kuroda M."/>
            <person name="Ohta T."/>
            <person name="Uchiyama I."/>
            <person name="Baba T."/>
            <person name="Yuzawa H."/>
            <person name="Kobayashi I."/>
            <person name="Cui L."/>
            <person name="Oguchi A."/>
            <person name="Aoki K."/>
            <person name="Nagai Y."/>
            <person name="Lian J.-Q."/>
            <person name="Ito T."/>
            <person name="Kanamori M."/>
            <person name="Matsumaru H."/>
            <person name="Maruyama A."/>
            <person name="Murakami H."/>
            <person name="Hosoyama A."/>
            <person name="Mizutani-Ui Y."/>
            <person name="Takahashi N.K."/>
            <person name="Sawano T."/>
            <person name="Inoue R."/>
            <person name="Kaito C."/>
            <person name="Sekimizu K."/>
            <person name="Hirakawa H."/>
            <person name="Kuhara S."/>
            <person name="Goto S."/>
            <person name="Yabuzaki J."/>
            <person name="Kanehisa M."/>
            <person name="Yamashita A."/>
            <person name="Oshima K."/>
            <person name="Furuya K."/>
            <person name="Yoshino C."/>
            <person name="Shiba T."/>
            <person name="Hattori M."/>
            <person name="Ogasawara N."/>
            <person name="Hayashi H."/>
            <person name="Hiramatsu K."/>
        </authorList>
    </citation>
    <scope>NUCLEOTIDE SEQUENCE [LARGE SCALE GENOMIC DNA]</scope>
    <source>
        <strain>Mu50 / ATCC 700699</strain>
    </source>
</reference>
<organism>
    <name type="scientific">Staphylococcus aureus (strain Mu50 / ATCC 700699)</name>
    <dbReference type="NCBI Taxonomy" id="158878"/>
    <lineage>
        <taxon>Bacteria</taxon>
        <taxon>Bacillati</taxon>
        <taxon>Bacillota</taxon>
        <taxon>Bacilli</taxon>
        <taxon>Bacillales</taxon>
        <taxon>Staphylococcaceae</taxon>
        <taxon>Staphylococcus</taxon>
    </lineage>
</organism>
<comment type="function">
    <text evidence="1">Catalyzes quinol oxidation with the concomitant reduction of oxygen to water. Subunit II transfers the electrons from a quinol to the binuclear center of the catalytic subunit I (By similarity).</text>
</comment>
<comment type="catalytic activity">
    <reaction>
        <text>2 a quinol + O2 = 2 a quinone + 2 H2O</text>
        <dbReference type="Rhea" id="RHEA:55376"/>
        <dbReference type="ChEBI" id="CHEBI:15377"/>
        <dbReference type="ChEBI" id="CHEBI:15379"/>
        <dbReference type="ChEBI" id="CHEBI:24646"/>
        <dbReference type="ChEBI" id="CHEBI:132124"/>
    </reaction>
</comment>
<comment type="subcellular location">
    <subcellularLocation>
        <location evidence="3">Cell membrane</location>
        <topology evidence="1">Multi-pass membrane protein</topology>
    </subcellularLocation>
</comment>
<comment type="similarity">
    <text evidence="5">Belongs to the cytochrome c oxidase subunit 2 family.</text>
</comment>
<accession>Q99V36</accession>
<keyword id="KW-1003">Cell membrane</keyword>
<keyword id="KW-0249">Electron transport</keyword>
<keyword id="KW-0449">Lipoprotein</keyword>
<keyword id="KW-0472">Membrane</keyword>
<keyword id="KW-0560">Oxidoreductase</keyword>
<keyword id="KW-0564">Palmitate</keyword>
<keyword id="KW-0679">Respiratory chain</keyword>
<keyword id="KW-0732">Signal</keyword>
<keyword id="KW-0812">Transmembrane</keyword>
<keyword id="KW-1133">Transmembrane helix</keyword>
<keyword id="KW-0813">Transport</keyword>
<name>QOX2_STAAM</name>
<dbReference type="EC" id="1.10.3.-"/>
<dbReference type="EMBL" id="BA000017">
    <property type="protein sequence ID" value="BAB57223.1"/>
    <property type="molecule type" value="Genomic_DNA"/>
</dbReference>
<dbReference type="RefSeq" id="WP_000032836.1">
    <property type="nucleotide sequence ID" value="NC_002758.2"/>
</dbReference>
<dbReference type="SMR" id="Q99V36"/>
<dbReference type="KEGG" id="sav:SAV1061"/>
<dbReference type="HOGENOM" id="CLU_036876_6_0_9"/>
<dbReference type="PhylomeDB" id="Q99V36"/>
<dbReference type="Proteomes" id="UP000002481">
    <property type="component" value="Chromosome"/>
</dbReference>
<dbReference type="GO" id="GO:0005886">
    <property type="term" value="C:plasma membrane"/>
    <property type="evidence" value="ECO:0007669"/>
    <property type="project" value="UniProtKB-SubCell"/>
</dbReference>
<dbReference type="GO" id="GO:0005507">
    <property type="term" value="F:copper ion binding"/>
    <property type="evidence" value="ECO:0007669"/>
    <property type="project" value="InterPro"/>
</dbReference>
<dbReference type="GO" id="GO:0009486">
    <property type="term" value="F:cytochrome bo3 ubiquinol oxidase activity"/>
    <property type="evidence" value="ECO:0007669"/>
    <property type="project" value="InterPro"/>
</dbReference>
<dbReference type="GO" id="GO:0004129">
    <property type="term" value="F:cytochrome-c oxidase activity"/>
    <property type="evidence" value="ECO:0007669"/>
    <property type="project" value="InterPro"/>
</dbReference>
<dbReference type="GO" id="GO:0016682">
    <property type="term" value="F:oxidoreductase activity, acting on diphenols and related substances as donors, oxygen as acceptor"/>
    <property type="evidence" value="ECO:0007669"/>
    <property type="project" value="InterPro"/>
</dbReference>
<dbReference type="GO" id="GO:0042773">
    <property type="term" value="P:ATP synthesis coupled electron transport"/>
    <property type="evidence" value="ECO:0007669"/>
    <property type="project" value="TreeGrafter"/>
</dbReference>
<dbReference type="CDD" id="cd04212">
    <property type="entry name" value="CuRO_UO_II"/>
    <property type="match status" value="1"/>
</dbReference>
<dbReference type="FunFam" id="2.60.40.420:FF:000014">
    <property type="entry name" value="Quinol oxidase subunit 2"/>
    <property type="match status" value="1"/>
</dbReference>
<dbReference type="Gene3D" id="1.10.287.90">
    <property type="match status" value="1"/>
</dbReference>
<dbReference type="Gene3D" id="2.60.40.420">
    <property type="entry name" value="Cupredoxins - blue copper proteins"/>
    <property type="match status" value="1"/>
</dbReference>
<dbReference type="InterPro" id="IPR045187">
    <property type="entry name" value="CcO_II"/>
</dbReference>
<dbReference type="InterPro" id="IPR002429">
    <property type="entry name" value="CcO_II-like_C"/>
</dbReference>
<dbReference type="InterPro" id="IPR008972">
    <property type="entry name" value="Cupredoxin"/>
</dbReference>
<dbReference type="InterPro" id="IPR034227">
    <property type="entry name" value="CuRO_UO_II"/>
</dbReference>
<dbReference type="InterPro" id="IPR011759">
    <property type="entry name" value="Cyt_c_oxidase_su2_TM_dom"/>
</dbReference>
<dbReference type="InterPro" id="IPR036257">
    <property type="entry name" value="Cyt_c_oxidase_su2_TM_sf"/>
</dbReference>
<dbReference type="InterPro" id="IPR006332">
    <property type="entry name" value="QoxA"/>
</dbReference>
<dbReference type="NCBIfam" id="TIGR01432">
    <property type="entry name" value="QOXA"/>
    <property type="match status" value="1"/>
</dbReference>
<dbReference type="PANTHER" id="PTHR22888:SF18">
    <property type="entry name" value="CYTOCHROME BO(3) UBIQUINOL OXIDASE SUBUNIT 2"/>
    <property type="match status" value="1"/>
</dbReference>
<dbReference type="PANTHER" id="PTHR22888">
    <property type="entry name" value="CYTOCHROME C OXIDASE, SUBUNIT II"/>
    <property type="match status" value="1"/>
</dbReference>
<dbReference type="Pfam" id="PF02790">
    <property type="entry name" value="COX2_TM"/>
    <property type="match status" value="1"/>
</dbReference>
<dbReference type="SUPFAM" id="SSF49503">
    <property type="entry name" value="Cupredoxins"/>
    <property type="match status" value="1"/>
</dbReference>
<dbReference type="SUPFAM" id="SSF81464">
    <property type="entry name" value="Cytochrome c oxidase subunit II-like, transmembrane region"/>
    <property type="match status" value="1"/>
</dbReference>
<dbReference type="PROSITE" id="PS50857">
    <property type="entry name" value="COX2_CUA"/>
    <property type="match status" value="1"/>
</dbReference>
<dbReference type="PROSITE" id="PS50999">
    <property type="entry name" value="COX2_TM"/>
    <property type="match status" value="1"/>
</dbReference>
<dbReference type="PROSITE" id="PS51257">
    <property type="entry name" value="PROKAR_LIPOPROTEIN"/>
    <property type="match status" value="1"/>
</dbReference>
<sequence length="366" mass="41777">MSKFKSLLLLFGTLILLSGCSNIEIFNAKGPVASSQKFLILYSIVFMLVICFVVLGMFAIFIYKYSYNKNAESGKMHHNAIIETIWFVIPIIIVAALAIPTVKTLYDYEKPPKSEKDPMVVYAVSAGYKWFFAYPDEHIETVNTLTIPKDRPVVFKLQAMDTMTSFWIPQLGGQKYAMTGMTMNWTLEASQTGTFRGRNSNFNGEGFSRQTFKVNAVSQKDYDKWVKEVKGKKTLDQDTFDKQLLPSTPNKALEFNGTHMAFVDPAADPEYIFYAYKRFNFELKDPNFTSEENMFKDVSDKPLIPARKAQITNANYKRHGMKLMILGNDEPYNNEFKKDESKNAKEMKKISKDAQDQDNDDHGGGH</sequence>
<gene>
    <name type="primary">qoxA</name>
    <name type="ordered locus">SAV1061</name>
</gene>
<feature type="signal peptide" evidence="3">
    <location>
        <begin position="1"/>
        <end position="19"/>
    </location>
</feature>
<feature type="chain" id="PRO_0000275875" description="Probable quinol oxidase subunit 2">
    <location>
        <begin position="20"/>
        <end position="366"/>
    </location>
</feature>
<feature type="transmembrane region" description="Helical" evidence="2">
    <location>
        <begin position="38"/>
        <end position="58"/>
    </location>
</feature>
<feature type="transmembrane region" description="Helical" evidence="2">
    <location>
        <begin position="80"/>
        <end position="100"/>
    </location>
</feature>
<feature type="region of interest" description="Disordered" evidence="4">
    <location>
        <begin position="330"/>
        <end position="366"/>
    </location>
</feature>
<feature type="compositionally biased region" description="Basic and acidic residues" evidence="4">
    <location>
        <begin position="335"/>
        <end position="366"/>
    </location>
</feature>
<feature type="lipid moiety-binding region" description="N-palmitoyl cysteine" evidence="3">
    <location>
        <position position="20"/>
    </location>
</feature>
<feature type="lipid moiety-binding region" description="S-diacylglycerol cysteine" evidence="3">
    <location>
        <position position="20"/>
    </location>
</feature>
<proteinExistence type="inferred from homology"/>
<protein>
    <recommendedName>
        <fullName>Probable quinol oxidase subunit 2</fullName>
        <ecNumber>1.10.3.-</ecNumber>
    </recommendedName>
    <alternativeName>
        <fullName>Quinol oxidase polypeptide II</fullName>
    </alternativeName>
</protein>